<dbReference type="EMBL" id="AAFI02000100">
    <property type="protein sequence ID" value="EAL63734.1"/>
    <property type="molecule type" value="Genomic_DNA"/>
</dbReference>
<dbReference type="RefSeq" id="XP_637243.1">
    <property type="nucleotide sequence ID" value="XM_632151.1"/>
</dbReference>
<dbReference type="SMR" id="Q54KI0"/>
<dbReference type="FunCoup" id="Q54KI0">
    <property type="interactions" value="370"/>
</dbReference>
<dbReference type="STRING" id="44689.Q54KI0"/>
<dbReference type="PaxDb" id="44689-DDB0233916"/>
<dbReference type="EnsemblProtists" id="EAL63734">
    <property type="protein sequence ID" value="EAL63734"/>
    <property type="gene ID" value="DDB_G0287333"/>
</dbReference>
<dbReference type="GeneID" id="8626074"/>
<dbReference type="KEGG" id="ddi:DDB_G0287333"/>
<dbReference type="dictyBase" id="DDB_G0287333">
    <property type="gene designation" value="eif3J"/>
</dbReference>
<dbReference type="VEuPathDB" id="AmoebaDB:DDB_G0287333"/>
<dbReference type="eggNOG" id="KOG4813">
    <property type="taxonomic scope" value="Eukaryota"/>
</dbReference>
<dbReference type="HOGENOM" id="CLU_085806_2_1_1"/>
<dbReference type="InParanoid" id="Q54KI0"/>
<dbReference type="OMA" id="KPHYALW"/>
<dbReference type="PhylomeDB" id="Q54KI0"/>
<dbReference type="Reactome" id="R-DDI-156827">
    <property type="pathway name" value="L13a-mediated translational silencing of Ceruloplasmin expression"/>
</dbReference>
<dbReference type="Reactome" id="R-DDI-72689">
    <property type="pathway name" value="Formation of a pool of free 40S subunits"/>
</dbReference>
<dbReference type="Reactome" id="R-DDI-72695">
    <property type="pathway name" value="Formation of the ternary complex, and subsequently, the 43S complex"/>
</dbReference>
<dbReference type="Reactome" id="R-DDI-72702">
    <property type="pathway name" value="Ribosomal scanning and start codon recognition"/>
</dbReference>
<dbReference type="PRO" id="PR:Q54KI0"/>
<dbReference type="Proteomes" id="UP000002195">
    <property type="component" value="Chromosome 5"/>
</dbReference>
<dbReference type="GO" id="GO:0016282">
    <property type="term" value="C:eukaryotic 43S preinitiation complex"/>
    <property type="evidence" value="ECO:0007669"/>
    <property type="project" value="UniProtKB-UniRule"/>
</dbReference>
<dbReference type="GO" id="GO:0033290">
    <property type="term" value="C:eukaryotic 48S preinitiation complex"/>
    <property type="evidence" value="ECO:0007669"/>
    <property type="project" value="UniProtKB-UniRule"/>
</dbReference>
<dbReference type="GO" id="GO:0005852">
    <property type="term" value="C:eukaryotic translation initiation factor 3 complex"/>
    <property type="evidence" value="ECO:0000318"/>
    <property type="project" value="GO_Central"/>
</dbReference>
<dbReference type="GO" id="GO:0003743">
    <property type="term" value="F:translation initiation factor activity"/>
    <property type="evidence" value="ECO:0007669"/>
    <property type="project" value="UniProtKB-UniRule"/>
</dbReference>
<dbReference type="GO" id="GO:0001732">
    <property type="term" value="P:formation of cytoplasmic translation initiation complex"/>
    <property type="evidence" value="ECO:0007669"/>
    <property type="project" value="UniProtKB-UniRule"/>
</dbReference>
<dbReference type="Gene3D" id="1.10.246.60">
    <property type="entry name" value="Eukaryotic translation initiation factor 3 like domains"/>
    <property type="match status" value="1"/>
</dbReference>
<dbReference type="HAMAP" id="MF_03009">
    <property type="entry name" value="eIF3j"/>
    <property type="match status" value="1"/>
</dbReference>
<dbReference type="InterPro" id="IPR023194">
    <property type="entry name" value="eIF3-like_dom_sf"/>
</dbReference>
<dbReference type="InterPro" id="IPR013906">
    <property type="entry name" value="eIF3j"/>
</dbReference>
<dbReference type="PANTHER" id="PTHR21681">
    <property type="entry name" value="EUKARYOTIC TRANSLATION INITIATION FACTOR 3 SUBUNIT J"/>
    <property type="match status" value="1"/>
</dbReference>
<dbReference type="PANTHER" id="PTHR21681:SF0">
    <property type="entry name" value="EUKARYOTIC TRANSLATION INITIATION FACTOR 3 SUBUNIT J"/>
    <property type="match status" value="1"/>
</dbReference>
<dbReference type="Pfam" id="PF08597">
    <property type="entry name" value="eIF3_subunit"/>
    <property type="match status" value="1"/>
</dbReference>
<evidence type="ECO:0000255" key="1">
    <source>
        <dbReference type="HAMAP-Rule" id="MF_03009"/>
    </source>
</evidence>
<evidence type="ECO:0000256" key="2">
    <source>
        <dbReference type="SAM" id="MobiDB-lite"/>
    </source>
</evidence>
<accession>Q54KI0</accession>
<reference key="1">
    <citation type="journal article" date="2005" name="Nature">
        <title>The genome of the social amoeba Dictyostelium discoideum.</title>
        <authorList>
            <person name="Eichinger L."/>
            <person name="Pachebat J.A."/>
            <person name="Gloeckner G."/>
            <person name="Rajandream M.A."/>
            <person name="Sucgang R."/>
            <person name="Berriman M."/>
            <person name="Song J."/>
            <person name="Olsen R."/>
            <person name="Szafranski K."/>
            <person name="Xu Q."/>
            <person name="Tunggal B."/>
            <person name="Kummerfeld S."/>
            <person name="Madera M."/>
            <person name="Konfortov B.A."/>
            <person name="Rivero F."/>
            <person name="Bankier A.T."/>
            <person name="Lehmann R."/>
            <person name="Hamlin N."/>
            <person name="Davies R."/>
            <person name="Gaudet P."/>
            <person name="Fey P."/>
            <person name="Pilcher K."/>
            <person name="Chen G."/>
            <person name="Saunders D."/>
            <person name="Sodergren E.J."/>
            <person name="Davis P."/>
            <person name="Kerhornou A."/>
            <person name="Nie X."/>
            <person name="Hall N."/>
            <person name="Anjard C."/>
            <person name="Hemphill L."/>
            <person name="Bason N."/>
            <person name="Farbrother P."/>
            <person name="Desany B."/>
            <person name="Just E."/>
            <person name="Morio T."/>
            <person name="Rost R."/>
            <person name="Churcher C.M."/>
            <person name="Cooper J."/>
            <person name="Haydock S."/>
            <person name="van Driessche N."/>
            <person name="Cronin A."/>
            <person name="Goodhead I."/>
            <person name="Muzny D.M."/>
            <person name="Mourier T."/>
            <person name="Pain A."/>
            <person name="Lu M."/>
            <person name="Harper D."/>
            <person name="Lindsay R."/>
            <person name="Hauser H."/>
            <person name="James K.D."/>
            <person name="Quiles M."/>
            <person name="Madan Babu M."/>
            <person name="Saito T."/>
            <person name="Buchrieser C."/>
            <person name="Wardroper A."/>
            <person name="Felder M."/>
            <person name="Thangavelu M."/>
            <person name="Johnson D."/>
            <person name="Knights A."/>
            <person name="Loulseged H."/>
            <person name="Mungall K.L."/>
            <person name="Oliver K."/>
            <person name="Price C."/>
            <person name="Quail M.A."/>
            <person name="Urushihara H."/>
            <person name="Hernandez J."/>
            <person name="Rabbinowitsch E."/>
            <person name="Steffen D."/>
            <person name="Sanders M."/>
            <person name="Ma J."/>
            <person name="Kohara Y."/>
            <person name="Sharp S."/>
            <person name="Simmonds M.N."/>
            <person name="Spiegler S."/>
            <person name="Tivey A."/>
            <person name="Sugano S."/>
            <person name="White B."/>
            <person name="Walker D."/>
            <person name="Woodward J.R."/>
            <person name="Winckler T."/>
            <person name="Tanaka Y."/>
            <person name="Shaulsky G."/>
            <person name="Schleicher M."/>
            <person name="Weinstock G.M."/>
            <person name="Rosenthal A."/>
            <person name="Cox E.C."/>
            <person name="Chisholm R.L."/>
            <person name="Gibbs R.A."/>
            <person name="Loomis W.F."/>
            <person name="Platzer M."/>
            <person name="Kay R.R."/>
            <person name="Williams J.G."/>
            <person name="Dear P.H."/>
            <person name="Noegel A.A."/>
            <person name="Barrell B.G."/>
            <person name="Kuspa A."/>
        </authorList>
    </citation>
    <scope>NUCLEOTIDE SEQUENCE [LARGE SCALE GENOMIC DNA]</scope>
    <source>
        <strain>AX4</strain>
    </source>
</reference>
<gene>
    <name type="primary">eif3J</name>
    <name type="synonym">eif3s1</name>
    <name type="ORF">DDB_G0287333</name>
</gene>
<sequence length="219" mass="25301">MSDWSDLQKDKWINENREVEEVDAWDASSEDEVEKVEEEIKEPPKPVVKQLTKKQALQRAIELKEKELKEPQGDFDIYLEEKRKKELQEASDLENSKNLFSGLSVKESSSGEPISTFIPKTEKDFEQYSQIVSDYLLKYDSSIHYATFFKSLMKKVLVNVSSSDMNDISKTLTVLINEKLKNEKSGKGGNKTKTKVAPKKIHMGNELQNYDDFDDDDFM</sequence>
<protein>
    <recommendedName>
        <fullName evidence="1">Eukaryotic translation initiation factor 3 subunit J</fullName>
        <shortName evidence="1">eIF3j</shortName>
    </recommendedName>
    <alternativeName>
        <fullName evidence="1">Eukaryotic translation initiation factor 3 subunit 1</fullName>
    </alternativeName>
    <alternativeName>
        <fullName evidence="1">eIF-3-alpha</fullName>
    </alternativeName>
</protein>
<feature type="chain" id="PRO_0000329453" description="Eukaryotic translation initiation factor 3 subunit J">
    <location>
        <begin position="1"/>
        <end position="219"/>
    </location>
</feature>
<feature type="region of interest" description="Disordered" evidence="2">
    <location>
        <begin position="22"/>
        <end position="47"/>
    </location>
</feature>
<feature type="coiled-coil region" evidence="1">
    <location>
        <begin position="48"/>
        <end position="100"/>
    </location>
</feature>
<feature type="compositionally biased region" description="Acidic residues" evidence="2">
    <location>
        <begin position="22"/>
        <end position="40"/>
    </location>
</feature>
<organism>
    <name type="scientific">Dictyostelium discoideum</name>
    <name type="common">Social amoeba</name>
    <dbReference type="NCBI Taxonomy" id="44689"/>
    <lineage>
        <taxon>Eukaryota</taxon>
        <taxon>Amoebozoa</taxon>
        <taxon>Evosea</taxon>
        <taxon>Eumycetozoa</taxon>
        <taxon>Dictyostelia</taxon>
        <taxon>Dictyosteliales</taxon>
        <taxon>Dictyosteliaceae</taxon>
        <taxon>Dictyostelium</taxon>
    </lineage>
</organism>
<proteinExistence type="inferred from homology"/>
<comment type="function">
    <text evidence="1">Component of the eukaryotic translation initiation factor 3 (eIF-3) complex, which is involved in protein synthesis of a specialized repertoire of mRNAs and, together with other initiation factors, stimulates binding of mRNA and methionyl-tRNAi to the 40S ribosome. The eIF-3 complex specifically targets and initiates translation of a subset of mRNAs involved in cell proliferation.</text>
</comment>
<comment type="subunit">
    <text evidence="1">Component of the eukaryotic translation initiation factor 3 (eIF-3) complex.</text>
</comment>
<comment type="subcellular location">
    <subcellularLocation>
        <location evidence="1">Cytoplasm</location>
    </subcellularLocation>
</comment>
<comment type="similarity">
    <text evidence="1">Belongs to the eIF-3 subunit J family.</text>
</comment>
<name>EIF3J_DICDI</name>
<keyword id="KW-0175">Coiled coil</keyword>
<keyword id="KW-0963">Cytoplasm</keyword>
<keyword id="KW-0396">Initiation factor</keyword>
<keyword id="KW-0648">Protein biosynthesis</keyword>
<keyword id="KW-1185">Reference proteome</keyword>